<dbReference type="EC" id="1.14.-.-"/>
<dbReference type="EMBL" id="AB488667">
    <property type="protein sequence ID" value="BAH23800.1"/>
    <property type="molecule type" value="mRNA"/>
</dbReference>
<dbReference type="EMBL" id="AP003612">
    <property type="protein sequence ID" value="BAD32835.1"/>
    <property type="molecule type" value="Genomic_DNA"/>
</dbReference>
<dbReference type="EMBL" id="AP008212">
    <property type="protein sequence ID" value="BAF19914.1"/>
    <property type="molecule type" value="Genomic_DNA"/>
</dbReference>
<dbReference type="EMBL" id="AP014962">
    <property type="protein sequence ID" value="BAS98490.1"/>
    <property type="molecule type" value="Genomic_DNA"/>
</dbReference>
<dbReference type="EMBL" id="CM000143">
    <property type="protein sequence ID" value="EEE65973.1"/>
    <property type="molecule type" value="Genomic_DNA"/>
</dbReference>
<dbReference type="RefSeq" id="XP_015641577.1">
    <property type="nucleotide sequence ID" value="XM_015786091.1"/>
</dbReference>
<dbReference type="SMR" id="Q69XM6"/>
<dbReference type="FunCoup" id="Q69XM6">
    <property type="interactions" value="871"/>
</dbReference>
<dbReference type="STRING" id="39947.Q69XM6"/>
<dbReference type="PaxDb" id="39947-Q69XM6"/>
<dbReference type="EnsemblPlants" id="Os06t0600400-01">
    <property type="protein sequence ID" value="Os06t0600400-01"/>
    <property type="gene ID" value="Os06g0600400"/>
</dbReference>
<dbReference type="Gramene" id="Os06t0600400-01">
    <property type="protein sequence ID" value="Os06t0600400-01"/>
    <property type="gene ID" value="Os06g0600400"/>
</dbReference>
<dbReference type="KEGG" id="dosa:Os06g0600400"/>
<dbReference type="eggNOG" id="KOG0157">
    <property type="taxonomic scope" value="Eukaryota"/>
</dbReference>
<dbReference type="HOGENOM" id="CLU_001570_5_0_1"/>
<dbReference type="InParanoid" id="Q69XM6"/>
<dbReference type="OMA" id="FPEHQEM"/>
<dbReference type="OrthoDB" id="1470350at2759"/>
<dbReference type="Proteomes" id="UP000000763">
    <property type="component" value="Chromosome 6"/>
</dbReference>
<dbReference type="Proteomes" id="UP000007752">
    <property type="component" value="Chromosome 6"/>
</dbReference>
<dbReference type="Proteomes" id="UP000059680">
    <property type="component" value="Chromosome 6"/>
</dbReference>
<dbReference type="GO" id="GO:0016020">
    <property type="term" value="C:membrane"/>
    <property type="evidence" value="ECO:0007669"/>
    <property type="project" value="UniProtKB-SubCell"/>
</dbReference>
<dbReference type="GO" id="GO:0020037">
    <property type="term" value="F:heme binding"/>
    <property type="evidence" value="ECO:0007669"/>
    <property type="project" value="InterPro"/>
</dbReference>
<dbReference type="GO" id="GO:0005506">
    <property type="term" value="F:iron ion binding"/>
    <property type="evidence" value="ECO:0007669"/>
    <property type="project" value="InterPro"/>
</dbReference>
<dbReference type="GO" id="GO:0004497">
    <property type="term" value="F:monooxygenase activity"/>
    <property type="evidence" value="ECO:0000314"/>
    <property type="project" value="UniProtKB"/>
</dbReference>
<dbReference type="GO" id="GO:0016705">
    <property type="term" value="F:oxidoreductase activity, acting on paired donors, with incorporation or reduction of molecular oxygen"/>
    <property type="evidence" value="ECO:0007669"/>
    <property type="project" value="InterPro"/>
</dbReference>
<dbReference type="GO" id="GO:0010268">
    <property type="term" value="P:brassinosteroid homeostasis"/>
    <property type="evidence" value="ECO:0000314"/>
    <property type="project" value="UniProtKB"/>
</dbReference>
<dbReference type="GO" id="GO:0016131">
    <property type="term" value="P:brassinosteroid metabolic process"/>
    <property type="evidence" value="ECO:0000314"/>
    <property type="project" value="UniProtKB"/>
</dbReference>
<dbReference type="CDD" id="cd20639">
    <property type="entry name" value="CYP734"/>
    <property type="match status" value="1"/>
</dbReference>
<dbReference type="FunFam" id="1.10.630.10:FF:000029">
    <property type="entry name" value="Cytochrome P450 734A1"/>
    <property type="match status" value="1"/>
</dbReference>
<dbReference type="Gene3D" id="1.10.630.10">
    <property type="entry name" value="Cytochrome P450"/>
    <property type="match status" value="1"/>
</dbReference>
<dbReference type="InterPro" id="IPR001128">
    <property type="entry name" value="Cyt_P450"/>
</dbReference>
<dbReference type="InterPro" id="IPR017972">
    <property type="entry name" value="Cyt_P450_CS"/>
</dbReference>
<dbReference type="InterPro" id="IPR002401">
    <property type="entry name" value="Cyt_P450_E_grp-I"/>
</dbReference>
<dbReference type="InterPro" id="IPR036396">
    <property type="entry name" value="Cyt_P450_sf"/>
</dbReference>
<dbReference type="InterPro" id="IPR050665">
    <property type="entry name" value="Cytochrome_P450_Monooxygen"/>
</dbReference>
<dbReference type="PANTHER" id="PTHR24282:SF43">
    <property type="entry name" value="CYTOCHROME P450 734A4"/>
    <property type="match status" value="1"/>
</dbReference>
<dbReference type="PANTHER" id="PTHR24282">
    <property type="entry name" value="CYTOCHROME P450 FAMILY MEMBER"/>
    <property type="match status" value="1"/>
</dbReference>
<dbReference type="Pfam" id="PF00067">
    <property type="entry name" value="p450"/>
    <property type="match status" value="1"/>
</dbReference>
<dbReference type="PRINTS" id="PR00463">
    <property type="entry name" value="EP450I"/>
</dbReference>
<dbReference type="PRINTS" id="PR00385">
    <property type="entry name" value="P450"/>
</dbReference>
<dbReference type="SUPFAM" id="SSF48264">
    <property type="entry name" value="Cytochrome P450"/>
    <property type="match status" value="1"/>
</dbReference>
<dbReference type="PROSITE" id="PS00086">
    <property type="entry name" value="CYTOCHROME_P450"/>
    <property type="match status" value="1"/>
</dbReference>
<keyword id="KW-0341">Growth regulation</keyword>
<keyword id="KW-0349">Heme</keyword>
<keyword id="KW-0408">Iron</keyword>
<keyword id="KW-0472">Membrane</keyword>
<keyword id="KW-0479">Metal-binding</keyword>
<keyword id="KW-0503">Monooxygenase</keyword>
<keyword id="KW-0560">Oxidoreductase</keyword>
<keyword id="KW-1185">Reference proteome</keyword>
<keyword id="KW-0812">Transmembrane</keyword>
<keyword id="KW-1133">Transmembrane helix</keyword>
<proteinExistence type="evidence at transcript level"/>
<protein>
    <recommendedName>
        <fullName>Cytochrome P450 734A4</fullName>
        <ecNumber>1.14.-.-</ecNumber>
    </recommendedName>
</protein>
<accession>Q69XM6</accession>
<accession>A0A0P0WYF2</accession>
<accession>B9X285</accession>
<reference key="1">
    <citation type="journal article" date="2011" name="Plant J.">
        <title>Rice CYP734As function as multisubstrate and multifunctional enzymes in brassinosteroid catabolism.</title>
        <authorList>
            <person name="Sakamoto T."/>
            <person name="Kawabe A."/>
            <person name="Tokida-Segawa A."/>
            <person name="Shimizu B.I."/>
            <person name="Takatsuto S."/>
            <person name="Shimada Y."/>
            <person name="Fujioka S."/>
            <person name="Mizutani M."/>
        </authorList>
    </citation>
    <scope>NUCLEOTIDE SEQUENCE [MRNA]</scope>
    <scope>FUNCTION</scope>
    <scope>TISSUE SPECIFICITY</scope>
    <scope>INDUCTION</scope>
    <source>
        <strain>cv. Nipponbare</strain>
    </source>
</reference>
<reference key="2">
    <citation type="journal article" date="2005" name="Nature">
        <title>The map-based sequence of the rice genome.</title>
        <authorList>
            <consortium name="International rice genome sequencing project (IRGSP)"/>
        </authorList>
    </citation>
    <scope>NUCLEOTIDE SEQUENCE [LARGE SCALE GENOMIC DNA]</scope>
    <source>
        <strain>cv. Nipponbare</strain>
    </source>
</reference>
<reference key="3">
    <citation type="journal article" date="2008" name="Nucleic Acids Res.">
        <title>The rice annotation project database (RAP-DB): 2008 update.</title>
        <authorList>
            <consortium name="The rice annotation project (RAP)"/>
        </authorList>
    </citation>
    <scope>GENOME REANNOTATION</scope>
    <source>
        <strain>cv. Nipponbare</strain>
    </source>
</reference>
<reference key="4">
    <citation type="journal article" date="2013" name="Rice">
        <title>Improvement of the Oryza sativa Nipponbare reference genome using next generation sequence and optical map data.</title>
        <authorList>
            <person name="Kawahara Y."/>
            <person name="de la Bastide M."/>
            <person name="Hamilton J.P."/>
            <person name="Kanamori H."/>
            <person name="McCombie W.R."/>
            <person name="Ouyang S."/>
            <person name="Schwartz D.C."/>
            <person name="Tanaka T."/>
            <person name="Wu J."/>
            <person name="Zhou S."/>
            <person name="Childs K.L."/>
            <person name="Davidson R.M."/>
            <person name="Lin H."/>
            <person name="Quesada-Ocampo L."/>
            <person name="Vaillancourt B."/>
            <person name="Sakai H."/>
            <person name="Lee S.S."/>
            <person name="Kim J."/>
            <person name="Numa H."/>
            <person name="Itoh T."/>
            <person name="Buell C.R."/>
            <person name="Matsumoto T."/>
        </authorList>
    </citation>
    <scope>GENOME REANNOTATION</scope>
    <source>
        <strain>cv. Nipponbare</strain>
    </source>
</reference>
<reference key="5">
    <citation type="journal article" date="2005" name="PLoS Biol.">
        <title>The genomes of Oryza sativa: a history of duplications.</title>
        <authorList>
            <person name="Yu J."/>
            <person name="Wang J."/>
            <person name="Lin W."/>
            <person name="Li S."/>
            <person name="Li H."/>
            <person name="Zhou J."/>
            <person name="Ni P."/>
            <person name="Dong W."/>
            <person name="Hu S."/>
            <person name="Zeng C."/>
            <person name="Zhang J."/>
            <person name="Zhang Y."/>
            <person name="Li R."/>
            <person name="Xu Z."/>
            <person name="Li S."/>
            <person name="Li X."/>
            <person name="Zheng H."/>
            <person name="Cong L."/>
            <person name="Lin L."/>
            <person name="Yin J."/>
            <person name="Geng J."/>
            <person name="Li G."/>
            <person name="Shi J."/>
            <person name="Liu J."/>
            <person name="Lv H."/>
            <person name="Li J."/>
            <person name="Wang J."/>
            <person name="Deng Y."/>
            <person name="Ran L."/>
            <person name="Shi X."/>
            <person name="Wang X."/>
            <person name="Wu Q."/>
            <person name="Li C."/>
            <person name="Ren X."/>
            <person name="Wang J."/>
            <person name="Wang X."/>
            <person name="Li D."/>
            <person name="Liu D."/>
            <person name="Zhang X."/>
            <person name="Ji Z."/>
            <person name="Zhao W."/>
            <person name="Sun Y."/>
            <person name="Zhang Z."/>
            <person name="Bao J."/>
            <person name="Han Y."/>
            <person name="Dong L."/>
            <person name="Ji J."/>
            <person name="Chen P."/>
            <person name="Wu S."/>
            <person name="Liu J."/>
            <person name="Xiao Y."/>
            <person name="Bu D."/>
            <person name="Tan J."/>
            <person name="Yang L."/>
            <person name="Ye C."/>
            <person name="Zhang J."/>
            <person name="Xu J."/>
            <person name="Zhou Y."/>
            <person name="Yu Y."/>
            <person name="Zhang B."/>
            <person name="Zhuang S."/>
            <person name="Wei H."/>
            <person name="Liu B."/>
            <person name="Lei M."/>
            <person name="Yu H."/>
            <person name="Li Y."/>
            <person name="Xu H."/>
            <person name="Wei S."/>
            <person name="He X."/>
            <person name="Fang L."/>
            <person name="Zhang Z."/>
            <person name="Zhang Y."/>
            <person name="Huang X."/>
            <person name="Su Z."/>
            <person name="Tong W."/>
            <person name="Li J."/>
            <person name="Tong Z."/>
            <person name="Li S."/>
            <person name="Ye J."/>
            <person name="Wang L."/>
            <person name="Fang L."/>
            <person name="Lei T."/>
            <person name="Chen C.-S."/>
            <person name="Chen H.-C."/>
            <person name="Xu Z."/>
            <person name="Li H."/>
            <person name="Huang H."/>
            <person name="Zhang F."/>
            <person name="Xu H."/>
            <person name="Li N."/>
            <person name="Zhao C."/>
            <person name="Li S."/>
            <person name="Dong L."/>
            <person name="Huang Y."/>
            <person name="Li L."/>
            <person name="Xi Y."/>
            <person name="Qi Q."/>
            <person name="Li W."/>
            <person name="Zhang B."/>
            <person name="Hu W."/>
            <person name="Zhang Y."/>
            <person name="Tian X."/>
            <person name="Jiao Y."/>
            <person name="Liang X."/>
            <person name="Jin J."/>
            <person name="Gao L."/>
            <person name="Zheng W."/>
            <person name="Hao B."/>
            <person name="Liu S.-M."/>
            <person name="Wang W."/>
            <person name="Yuan L."/>
            <person name="Cao M."/>
            <person name="McDermott J."/>
            <person name="Samudrala R."/>
            <person name="Wang J."/>
            <person name="Wong G.K.-S."/>
            <person name="Yang H."/>
        </authorList>
    </citation>
    <scope>NUCLEOTIDE SEQUENCE [LARGE SCALE GENOMIC DNA]</scope>
    <source>
        <strain>cv. Nipponbare</strain>
    </source>
</reference>
<comment type="function">
    <text evidence="3">Cytochrome P450 involved in brassinosteroids (BRs) inactivation and regulation of BRs homeostasis. Is a multifunctional and multisubstrate enzyme that controls the endogenous bioactive BR content both by direct inactivation of castasterone (CS) and by decreasing the levels of BR precursors. Catalyzes the oxidation of carbon 22 hydroxylated BR intermediates to produce C26 oxidized metabolites.</text>
</comment>
<comment type="cofactor">
    <cofactor evidence="1">
        <name>heme</name>
        <dbReference type="ChEBI" id="CHEBI:30413"/>
    </cofactor>
</comment>
<comment type="subcellular location">
    <subcellularLocation>
        <location evidence="2">Membrane</location>
        <topology evidence="2">Single-pass membrane protein</topology>
    </subcellularLocation>
</comment>
<comment type="tissue specificity">
    <text evidence="3">Expressed in roots, shoot apex, leaf sheaths, leaf blades, internodes and panicles.</text>
</comment>
<comment type="induction">
    <text evidence="3">By brassinolide (BL) and dark treatment.</text>
</comment>
<comment type="miscellaneous">
    <text>Plants overexpressing CYP734A4 show a dwarf phenotype, characterized by abnormal leaves with stiff, tortuous blades, undeveloped leaf sheaths, no flowering and bear seeds. Over-expression of CYP734A4 causes an important reduction of the levels of the BRs castasterone (CS), 6-deoxocastasterone (6-deoxoCS) and 6-deoxotyphasterol (6-deoxoTY).</text>
</comment>
<comment type="similarity">
    <text evidence="4">Belongs to the cytochrome P450 family.</text>
</comment>
<organism>
    <name type="scientific">Oryza sativa subsp. japonica</name>
    <name type="common">Rice</name>
    <dbReference type="NCBI Taxonomy" id="39947"/>
    <lineage>
        <taxon>Eukaryota</taxon>
        <taxon>Viridiplantae</taxon>
        <taxon>Streptophyta</taxon>
        <taxon>Embryophyta</taxon>
        <taxon>Tracheophyta</taxon>
        <taxon>Spermatophyta</taxon>
        <taxon>Magnoliopsida</taxon>
        <taxon>Liliopsida</taxon>
        <taxon>Poales</taxon>
        <taxon>Poaceae</taxon>
        <taxon>BOP clade</taxon>
        <taxon>Oryzoideae</taxon>
        <taxon>Oryzeae</taxon>
        <taxon>Oryzinae</taxon>
        <taxon>Oryza</taxon>
        <taxon>Oryza sativa</taxon>
    </lineage>
</organism>
<sequence>MMEAVAVAAAVLLLLHVAARVADAVWWRPRRLEAHFAGQGVRGPPYRFLVGCVREMVALMAEATAKPMPPAAPHNALPRVLAFYHYWRKIYGPTFLIWFGPTPRLTVAEPEMVREIFLTRAEAFDRYEAHPVVRQLEGDGLVSLHGDKWAHHRRVLTPGFYPDNLNRLVPHVGRSVAALAERWRAMACAGGGEVEVDVAEWFQAVAEEAITRATFGRSYDSGRVVFRLQARLMAFASEAFRKVLVPGYRFLPTKKNRMSWGLDREIRRGLVRLIGRRSGGDGGEEDETTTELKDKQDSGFNDLLGLMINAGVDRTMPVEDMVEECKTFFFAGKQTTTNLLTWATVLLAMHPDWQDRARREVLAVCGDAAGELPTKDHLPKLKTLGMILNETLRLYPPAVATIRRAKFDVTLGGGGDGDAGGIHIPRDTELLVPIMAIHHDARLWGPDAAQFNPARFASGAARAAKHPLAFIPFGLGSRMCIGQSLAILEAKLTMAVLLQRFDLALSPTYVHAPTVLMLLHPQYGAPLIFRPRQSQPSN</sequence>
<gene>
    <name type="primary">CYP734A4</name>
    <name type="ordered locus">Os06g0600400</name>
    <name type="ordered locus">LOC_Os06g39880</name>
    <name type="ORF">OsJ_21885</name>
    <name type="ORF">P0457B11.8</name>
</gene>
<evidence type="ECO:0000250" key="1"/>
<evidence type="ECO:0000255" key="2"/>
<evidence type="ECO:0000269" key="3">
    <source>
    </source>
</evidence>
<evidence type="ECO:0000305" key="4"/>
<name>C7344_ORYSJ</name>
<feature type="chain" id="PRO_0000411202" description="Cytochrome P450 734A4">
    <location>
        <begin position="1"/>
        <end position="538"/>
    </location>
</feature>
<feature type="transmembrane region" description="Helical" evidence="2">
    <location>
        <begin position="5"/>
        <end position="27"/>
    </location>
</feature>
<feature type="binding site" description="axial binding residue" evidence="1">
    <location>
        <position position="480"/>
    </location>
    <ligand>
        <name>heme</name>
        <dbReference type="ChEBI" id="CHEBI:30413"/>
    </ligand>
    <ligandPart>
        <name>Fe</name>
        <dbReference type="ChEBI" id="CHEBI:18248"/>
    </ligandPart>
</feature>
<feature type="sequence conflict" description="In Ref. 1; BAH23800." evidence="4" ref="1">
    <original>E</original>
    <variation>D</variation>
    <location>
        <position position="109"/>
    </location>
</feature>
<feature type="sequence conflict" description="In Ref. 1; BAH23800." evidence="4" ref="1">
    <original>D</original>
    <variation>G</variation>
    <location>
        <position position="352"/>
    </location>
</feature>